<organism>
    <name type="scientific">Shewanella sediminis (strain HAW-EB3)</name>
    <dbReference type="NCBI Taxonomy" id="425104"/>
    <lineage>
        <taxon>Bacteria</taxon>
        <taxon>Pseudomonadati</taxon>
        <taxon>Pseudomonadota</taxon>
        <taxon>Gammaproteobacteria</taxon>
        <taxon>Alteromonadales</taxon>
        <taxon>Shewanellaceae</taxon>
        <taxon>Shewanella</taxon>
    </lineage>
</organism>
<keyword id="KW-1185">Reference proteome</keyword>
<keyword id="KW-0678">Repressor</keyword>
<keyword id="KW-0687">Ribonucleoprotein</keyword>
<keyword id="KW-0689">Ribosomal protein</keyword>
<keyword id="KW-0694">RNA-binding</keyword>
<keyword id="KW-0699">rRNA-binding</keyword>
<keyword id="KW-0810">Translation regulation</keyword>
<keyword id="KW-0820">tRNA-binding</keyword>
<gene>
    <name evidence="1" type="primary">rplA</name>
    <name type="ordered locus">Ssed_4327</name>
</gene>
<comment type="function">
    <text evidence="1">Binds directly to 23S rRNA. The L1 stalk is quite mobile in the ribosome, and is involved in E site tRNA release.</text>
</comment>
<comment type="function">
    <text evidence="1">Protein L1 is also a translational repressor protein, it controls the translation of the L11 operon by binding to its mRNA.</text>
</comment>
<comment type="subunit">
    <text evidence="1">Part of the 50S ribosomal subunit.</text>
</comment>
<comment type="similarity">
    <text evidence="1">Belongs to the universal ribosomal protein uL1 family.</text>
</comment>
<feature type="chain" id="PRO_1000086308" description="Large ribosomal subunit protein uL1">
    <location>
        <begin position="1"/>
        <end position="233"/>
    </location>
</feature>
<evidence type="ECO:0000255" key="1">
    <source>
        <dbReference type="HAMAP-Rule" id="MF_01318"/>
    </source>
</evidence>
<evidence type="ECO:0000305" key="2"/>
<protein>
    <recommendedName>
        <fullName evidence="1">Large ribosomal subunit protein uL1</fullName>
    </recommendedName>
    <alternativeName>
        <fullName evidence="2">50S ribosomal protein L1</fullName>
    </alternativeName>
</protein>
<accession>A8G1F8</accession>
<name>RL1_SHESH</name>
<reference key="1">
    <citation type="submission" date="2007-08" db="EMBL/GenBank/DDBJ databases">
        <title>Complete sequence of Shewanella sediminis HAW-EB3.</title>
        <authorList>
            <consortium name="US DOE Joint Genome Institute"/>
            <person name="Copeland A."/>
            <person name="Lucas S."/>
            <person name="Lapidus A."/>
            <person name="Barry K."/>
            <person name="Glavina del Rio T."/>
            <person name="Dalin E."/>
            <person name="Tice H."/>
            <person name="Pitluck S."/>
            <person name="Chertkov O."/>
            <person name="Brettin T."/>
            <person name="Bruce D."/>
            <person name="Detter J.C."/>
            <person name="Han C."/>
            <person name="Schmutz J."/>
            <person name="Larimer F."/>
            <person name="Land M."/>
            <person name="Hauser L."/>
            <person name="Kyrpides N."/>
            <person name="Kim E."/>
            <person name="Zhao J.-S."/>
            <person name="Richardson P."/>
        </authorList>
    </citation>
    <scope>NUCLEOTIDE SEQUENCE [LARGE SCALE GENOMIC DNA]</scope>
    <source>
        <strain>HAW-EB3</strain>
    </source>
</reference>
<proteinExistence type="inferred from homology"/>
<sequence length="233" mass="24425">MAKLTKRARLIREKVEVTKNYDINEAVALLKELATAKFVESVDVAVNLGVDPRKSDQNVRGATVLPHGTGRDVRVAVFTQGANAEAATAAGAELVGMDELAAQVKAGEMNFDVVIASPDAMRVVGQLGQILGPRGLMPNPKTGTVTPNVAEAVKNAKAGQVRYRTDKNGIIHTTIGKVDFEAAQIKENLEALIGALVKAKPAAAKGVFLKKVSISTTMGAGVAVDQSTLDDAK</sequence>
<dbReference type="EMBL" id="CP000821">
    <property type="protein sequence ID" value="ABV38931.1"/>
    <property type="molecule type" value="Genomic_DNA"/>
</dbReference>
<dbReference type="RefSeq" id="WP_012144658.1">
    <property type="nucleotide sequence ID" value="NC_009831.1"/>
</dbReference>
<dbReference type="SMR" id="A8G1F8"/>
<dbReference type="STRING" id="425104.Ssed_4327"/>
<dbReference type="KEGG" id="sse:Ssed_4327"/>
<dbReference type="eggNOG" id="COG0081">
    <property type="taxonomic scope" value="Bacteria"/>
</dbReference>
<dbReference type="HOGENOM" id="CLU_062853_0_0_6"/>
<dbReference type="OrthoDB" id="9803740at2"/>
<dbReference type="Proteomes" id="UP000002015">
    <property type="component" value="Chromosome"/>
</dbReference>
<dbReference type="GO" id="GO:0022625">
    <property type="term" value="C:cytosolic large ribosomal subunit"/>
    <property type="evidence" value="ECO:0007669"/>
    <property type="project" value="TreeGrafter"/>
</dbReference>
<dbReference type="GO" id="GO:0019843">
    <property type="term" value="F:rRNA binding"/>
    <property type="evidence" value="ECO:0007669"/>
    <property type="project" value="UniProtKB-UniRule"/>
</dbReference>
<dbReference type="GO" id="GO:0003735">
    <property type="term" value="F:structural constituent of ribosome"/>
    <property type="evidence" value="ECO:0007669"/>
    <property type="project" value="InterPro"/>
</dbReference>
<dbReference type="GO" id="GO:0000049">
    <property type="term" value="F:tRNA binding"/>
    <property type="evidence" value="ECO:0007669"/>
    <property type="project" value="UniProtKB-KW"/>
</dbReference>
<dbReference type="GO" id="GO:0006417">
    <property type="term" value="P:regulation of translation"/>
    <property type="evidence" value="ECO:0007669"/>
    <property type="project" value="UniProtKB-KW"/>
</dbReference>
<dbReference type="GO" id="GO:0006412">
    <property type="term" value="P:translation"/>
    <property type="evidence" value="ECO:0007669"/>
    <property type="project" value="UniProtKB-UniRule"/>
</dbReference>
<dbReference type="CDD" id="cd00403">
    <property type="entry name" value="Ribosomal_L1"/>
    <property type="match status" value="1"/>
</dbReference>
<dbReference type="FunFam" id="3.40.50.790:FF:000001">
    <property type="entry name" value="50S ribosomal protein L1"/>
    <property type="match status" value="1"/>
</dbReference>
<dbReference type="Gene3D" id="3.30.190.20">
    <property type="match status" value="1"/>
</dbReference>
<dbReference type="Gene3D" id="3.40.50.790">
    <property type="match status" value="1"/>
</dbReference>
<dbReference type="HAMAP" id="MF_01318_B">
    <property type="entry name" value="Ribosomal_uL1_B"/>
    <property type="match status" value="1"/>
</dbReference>
<dbReference type="InterPro" id="IPR005878">
    <property type="entry name" value="Ribosom_uL1_bac-type"/>
</dbReference>
<dbReference type="InterPro" id="IPR002143">
    <property type="entry name" value="Ribosomal_uL1"/>
</dbReference>
<dbReference type="InterPro" id="IPR023674">
    <property type="entry name" value="Ribosomal_uL1-like"/>
</dbReference>
<dbReference type="InterPro" id="IPR028364">
    <property type="entry name" value="Ribosomal_uL1/biogenesis"/>
</dbReference>
<dbReference type="InterPro" id="IPR016095">
    <property type="entry name" value="Ribosomal_uL1_3-a/b-sand"/>
</dbReference>
<dbReference type="InterPro" id="IPR023673">
    <property type="entry name" value="Ribosomal_uL1_CS"/>
</dbReference>
<dbReference type="NCBIfam" id="TIGR01169">
    <property type="entry name" value="rplA_bact"/>
    <property type="match status" value="1"/>
</dbReference>
<dbReference type="PANTHER" id="PTHR36427">
    <property type="entry name" value="54S RIBOSOMAL PROTEIN L1, MITOCHONDRIAL"/>
    <property type="match status" value="1"/>
</dbReference>
<dbReference type="PANTHER" id="PTHR36427:SF3">
    <property type="entry name" value="LARGE RIBOSOMAL SUBUNIT PROTEIN UL1M"/>
    <property type="match status" value="1"/>
</dbReference>
<dbReference type="Pfam" id="PF00687">
    <property type="entry name" value="Ribosomal_L1"/>
    <property type="match status" value="1"/>
</dbReference>
<dbReference type="PIRSF" id="PIRSF002155">
    <property type="entry name" value="Ribosomal_L1"/>
    <property type="match status" value="1"/>
</dbReference>
<dbReference type="SUPFAM" id="SSF56808">
    <property type="entry name" value="Ribosomal protein L1"/>
    <property type="match status" value="1"/>
</dbReference>
<dbReference type="PROSITE" id="PS01199">
    <property type="entry name" value="RIBOSOMAL_L1"/>
    <property type="match status" value="1"/>
</dbReference>